<protein>
    <recommendedName>
        <fullName evidence="1">Small ribosomal subunit protein uS19</fullName>
    </recommendedName>
    <alternativeName>
        <fullName evidence="2">30S ribosomal protein S19</fullName>
    </alternativeName>
</protein>
<name>RS19_LIGS1</name>
<organism>
    <name type="scientific">Ligilactobacillus salivarius (strain UCC118)</name>
    <name type="common">Lactobacillus salivarius</name>
    <dbReference type="NCBI Taxonomy" id="362948"/>
    <lineage>
        <taxon>Bacteria</taxon>
        <taxon>Bacillati</taxon>
        <taxon>Bacillota</taxon>
        <taxon>Bacilli</taxon>
        <taxon>Lactobacillales</taxon>
        <taxon>Lactobacillaceae</taxon>
        <taxon>Ligilactobacillus</taxon>
    </lineage>
</organism>
<sequence length="93" mass="10675">MSRSLKKGPFVDEHLMKKVEAQADQEKKSVIKTWSRRSTIFPSFIGYTIAVYDGRKHVPVYIQEDMVGHKLGEFVPTRTFHGHGNDDKKTGVR</sequence>
<feature type="chain" id="PRO_0000265376" description="Small ribosomal subunit protein uS19">
    <location>
        <begin position="1"/>
        <end position="93"/>
    </location>
</feature>
<reference key="1">
    <citation type="journal article" date="2006" name="Proc. Natl. Acad. Sci. U.S.A.">
        <title>Multireplicon genome architecture of Lactobacillus salivarius.</title>
        <authorList>
            <person name="Claesson M.J."/>
            <person name="Li Y."/>
            <person name="Leahy S."/>
            <person name="Canchaya C."/>
            <person name="van Pijkeren J.P."/>
            <person name="Cerdeno-Tarraga A.M."/>
            <person name="Parkhill J."/>
            <person name="Flynn S."/>
            <person name="O'Sullivan G.C."/>
            <person name="Collins J.K."/>
            <person name="Higgins D."/>
            <person name="Shanahan F."/>
            <person name="Fitzgerald G.F."/>
            <person name="van Sinderen D."/>
            <person name="O'Toole P.W."/>
        </authorList>
    </citation>
    <scope>NUCLEOTIDE SEQUENCE [LARGE SCALE GENOMIC DNA]</scope>
    <source>
        <strain>UCC118</strain>
    </source>
</reference>
<dbReference type="EMBL" id="CP000233">
    <property type="protein sequence ID" value="ABE00235.1"/>
    <property type="molecule type" value="Genomic_DNA"/>
</dbReference>
<dbReference type="RefSeq" id="WP_003705314.1">
    <property type="nucleotide sequence ID" value="NC_007929.1"/>
</dbReference>
<dbReference type="RefSeq" id="YP_536318.1">
    <property type="nucleotide sequence ID" value="NC_007929.1"/>
</dbReference>
<dbReference type="SMR" id="Q1WS94"/>
<dbReference type="STRING" id="362948.LSL_1431"/>
<dbReference type="GeneID" id="89466166"/>
<dbReference type="KEGG" id="lsl:LSL_1431"/>
<dbReference type="PATRIC" id="fig|362948.14.peg.1514"/>
<dbReference type="HOGENOM" id="CLU_144911_0_1_9"/>
<dbReference type="OrthoDB" id="9797833at2"/>
<dbReference type="Proteomes" id="UP000006559">
    <property type="component" value="Chromosome"/>
</dbReference>
<dbReference type="GO" id="GO:0005737">
    <property type="term" value="C:cytoplasm"/>
    <property type="evidence" value="ECO:0007669"/>
    <property type="project" value="UniProtKB-ARBA"/>
</dbReference>
<dbReference type="GO" id="GO:0015935">
    <property type="term" value="C:small ribosomal subunit"/>
    <property type="evidence" value="ECO:0007669"/>
    <property type="project" value="InterPro"/>
</dbReference>
<dbReference type="GO" id="GO:0019843">
    <property type="term" value="F:rRNA binding"/>
    <property type="evidence" value="ECO:0007669"/>
    <property type="project" value="UniProtKB-UniRule"/>
</dbReference>
<dbReference type="GO" id="GO:0003735">
    <property type="term" value="F:structural constituent of ribosome"/>
    <property type="evidence" value="ECO:0007669"/>
    <property type="project" value="InterPro"/>
</dbReference>
<dbReference type="GO" id="GO:0000028">
    <property type="term" value="P:ribosomal small subunit assembly"/>
    <property type="evidence" value="ECO:0007669"/>
    <property type="project" value="TreeGrafter"/>
</dbReference>
<dbReference type="GO" id="GO:0006412">
    <property type="term" value="P:translation"/>
    <property type="evidence" value="ECO:0007669"/>
    <property type="project" value="UniProtKB-UniRule"/>
</dbReference>
<dbReference type="FunFam" id="3.30.860.10:FF:000001">
    <property type="entry name" value="30S ribosomal protein S19"/>
    <property type="match status" value="1"/>
</dbReference>
<dbReference type="Gene3D" id="3.30.860.10">
    <property type="entry name" value="30s Ribosomal Protein S19, Chain A"/>
    <property type="match status" value="1"/>
</dbReference>
<dbReference type="HAMAP" id="MF_00531">
    <property type="entry name" value="Ribosomal_uS19"/>
    <property type="match status" value="1"/>
</dbReference>
<dbReference type="InterPro" id="IPR002222">
    <property type="entry name" value="Ribosomal_uS19"/>
</dbReference>
<dbReference type="InterPro" id="IPR005732">
    <property type="entry name" value="Ribosomal_uS19_bac-type"/>
</dbReference>
<dbReference type="InterPro" id="IPR020934">
    <property type="entry name" value="Ribosomal_uS19_CS"/>
</dbReference>
<dbReference type="InterPro" id="IPR023575">
    <property type="entry name" value="Ribosomal_uS19_SF"/>
</dbReference>
<dbReference type="NCBIfam" id="TIGR01050">
    <property type="entry name" value="rpsS_bact"/>
    <property type="match status" value="1"/>
</dbReference>
<dbReference type="PANTHER" id="PTHR11880">
    <property type="entry name" value="RIBOSOMAL PROTEIN S19P FAMILY MEMBER"/>
    <property type="match status" value="1"/>
</dbReference>
<dbReference type="PANTHER" id="PTHR11880:SF8">
    <property type="entry name" value="SMALL RIBOSOMAL SUBUNIT PROTEIN US19M"/>
    <property type="match status" value="1"/>
</dbReference>
<dbReference type="Pfam" id="PF00203">
    <property type="entry name" value="Ribosomal_S19"/>
    <property type="match status" value="1"/>
</dbReference>
<dbReference type="PIRSF" id="PIRSF002144">
    <property type="entry name" value="Ribosomal_S19"/>
    <property type="match status" value="1"/>
</dbReference>
<dbReference type="PRINTS" id="PR00975">
    <property type="entry name" value="RIBOSOMALS19"/>
</dbReference>
<dbReference type="SUPFAM" id="SSF54570">
    <property type="entry name" value="Ribosomal protein S19"/>
    <property type="match status" value="1"/>
</dbReference>
<dbReference type="PROSITE" id="PS00323">
    <property type="entry name" value="RIBOSOMAL_S19"/>
    <property type="match status" value="1"/>
</dbReference>
<accession>Q1WS94</accession>
<keyword id="KW-1185">Reference proteome</keyword>
<keyword id="KW-0687">Ribonucleoprotein</keyword>
<keyword id="KW-0689">Ribosomal protein</keyword>
<keyword id="KW-0694">RNA-binding</keyword>
<keyword id="KW-0699">rRNA-binding</keyword>
<comment type="function">
    <text evidence="1">Protein S19 forms a complex with S13 that binds strongly to the 16S ribosomal RNA.</text>
</comment>
<comment type="similarity">
    <text evidence="1">Belongs to the universal ribosomal protein uS19 family.</text>
</comment>
<evidence type="ECO:0000255" key="1">
    <source>
        <dbReference type="HAMAP-Rule" id="MF_00531"/>
    </source>
</evidence>
<evidence type="ECO:0000305" key="2"/>
<proteinExistence type="inferred from homology"/>
<gene>
    <name evidence="1" type="primary">rpsS</name>
    <name type="ordered locus">LSL_1431</name>
</gene>